<comment type="function">
    <text evidence="1">One of the primary rRNA binding proteins, it binds directly to 16S rRNA central domain where it helps coordinate assembly of the platform of the 30S subunit.</text>
</comment>
<comment type="subunit">
    <text evidence="1">Part of the 30S ribosomal subunit.</text>
</comment>
<comment type="similarity">
    <text evidence="1">Belongs to the universal ribosomal protein uS8 family.</text>
</comment>
<name>RS8_METIG</name>
<keyword id="KW-0687">Ribonucleoprotein</keyword>
<keyword id="KW-0689">Ribosomal protein</keyword>
<keyword id="KW-0694">RNA-binding</keyword>
<keyword id="KW-0699">rRNA-binding</keyword>
<gene>
    <name evidence="1" type="primary">rps8</name>
</gene>
<organism>
    <name type="scientific">Methanotorris igneus</name>
    <name type="common">Methanococcus igneus</name>
    <dbReference type="NCBI Taxonomy" id="2189"/>
    <lineage>
        <taxon>Archaea</taxon>
        <taxon>Methanobacteriati</taxon>
        <taxon>Methanobacteriota</taxon>
        <taxon>Methanomada group</taxon>
        <taxon>Methanococci</taxon>
        <taxon>Methanococcales</taxon>
        <taxon>Methanocaldococcaceae</taxon>
        <taxon>Methanotorris</taxon>
    </lineage>
</organism>
<sequence>MSLMDPLANALNHLTNCERVGKKVFYIKPASKLIGRVLKVMQDHGYIGEFEFIEDGRAGIFKVELIGKINKCGAIKPRYAVKKHEFEKFEKRYLPARDFGLLIVSTSQGIMTHYEAKEKGIGGRLISYVY</sequence>
<dbReference type="EMBL" id="AF404828">
    <property type="protein sequence ID" value="AAK92536.1"/>
    <property type="molecule type" value="Genomic_DNA"/>
</dbReference>
<dbReference type="SMR" id="Q977V0"/>
<dbReference type="GO" id="GO:1990904">
    <property type="term" value="C:ribonucleoprotein complex"/>
    <property type="evidence" value="ECO:0007669"/>
    <property type="project" value="UniProtKB-KW"/>
</dbReference>
<dbReference type="GO" id="GO:0005840">
    <property type="term" value="C:ribosome"/>
    <property type="evidence" value="ECO:0007669"/>
    <property type="project" value="UniProtKB-KW"/>
</dbReference>
<dbReference type="GO" id="GO:0019843">
    <property type="term" value="F:rRNA binding"/>
    <property type="evidence" value="ECO:0007669"/>
    <property type="project" value="UniProtKB-UniRule"/>
</dbReference>
<dbReference type="GO" id="GO:0003735">
    <property type="term" value="F:structural constituent of ribosome"/>
    <property type="evidence" value="ECO:0007669"/>
    <property type="project" value="InterPro"/>
</dbReference>
<dbReference type="GO" id="GO:0006412">
    <property type="term" value="P:translation"/>
    <property type="evidence" value="ECO:0007669"/>
    <property type="project" value="UniProtKB-UniRule"/>
</dbReference>
<dbReference type="FunFam" id="3.30.1370.30:FF:000001">
    <property type="entry name" value="40S ribosomal protein S15a"/>
    <property type="match status" value="1"/>
</dbReference>
<dbReference type="FunFam" id="3.30.1490.10:FF:000002">
    <property type="entry name" value="40S ribosomal protein S15a"/>
    <property type="match status" value="1"/>
</dbReference>
<dbReference type="Gene3D" id="3.30.1370.30">
    <property type="match status" value="1"/>
</dbReference>
<dbReference type="Gene3D" id="3.30.1490.10">
    <property type="match status" value="1"/>
</dbReference>
<dbReference type="HAMAP" id="MF_01302_A">
    <property type="entry name" value="Ribosomal_uS8_A"/>
    <property type="match status" value="1"/>
</dbReference>
<dbReference type="InterPro" id="IPR000630">
    <property type="entry name" value="Ribosomal_uS8"/>
</dbReference>
<dbReference type="InterPro" id="IPR047863">
    <property type="entry name" value="Ribosomal_uS8_CS"/>
</dbReference>
<dbReference type="InterPro" id="IPR035987">
    <property type="entry name" value="Ribosomal_uS8_sf"/>
</dbReference>
<dbReference type="NCBIfam" id="NF003115">
    <property type="entry name" value="PRK04034.1"/>
    <property type="match status" value="1"/>
</dbReference>
<dbReference type="PANTHER" id="PTHR11758">
    <property type="entry name" value="40S RIBOSOMAL PROTEIN S15A"/>
    <property type="match status" value="1"/>
</dbReference>
<dbReference type="Pfam" id="PF00410">
    <property type="entry name" value="Ribosomal_S8"/>
    <property type="match status" value="1"/>
</dbReference>
<dbReference type="SUPFAM" id="SSF56047">
    <property type="entry name" value="Ribosomal protein S8"/>
    <property type="match status" value="1"/>
</dbReference>
<dbReference type="PROSITE" id="PS00053">
    <property type="entry name" value="RIBOSOMAL_S8"/>
    <property type="match status" value="1"/>
</dbReference>
<accession>Q977V0</accession>
<reference key="1">
    <citation type="submission" date="2001-08" db="EMBL/GenBank/DDBJ databases">
        <title>Sequence of the gene of ribosomal protein S8 from Methanococcus igneus.</title>
        <authorList>
            <person name="Lung B."/>
            <person name="Piendl W.A."/>
        </authorList>
    </citation>
    <scope>NUCLEOTIDE SEQUENCE [GENOMIC DNA]</scope>
</reference>
<protein>
    <recommendedName>
        <fullName evidence="1">Small ribosomal subunit protein uS8</fullName>
    </recommendedName>
    <alternativeName>
        <fullName evidence="2">30S ribosomal protein S8</fullName>
    </alternativeName>
</protein>
<evidence type="ECO:0000255" key="1">
    <source>
        <dbReference type="HAMAP-Rule" id="MF_01302"/>
    </source>
</evidence>
<evidence type="ECO:0000305" key="2"/>
<feature type="chain" id="PRO_0000126539" description="Small ribosomal subunit protein uS8">
    <location>
        <begin position="1"/>
        <end position="130"/>
    </location>
</feature>
<proteinExistence type="inferred from homology"/>